<name>HEM3_CALS8</name>
<keyword id="KW-0627">Porphyrin biosynthesis</keyword>
<keyword id="KW-0808">Transferase</keyword>
<evidence type="ECO:0000255" key="1">
    <source>
        <dbReference type="HAMAP-Rule" id="MF_00260"/>
    </source>
</evidence>
<gene>
    <name evidence="1" type="primary">hemC</name>
    <name type="ordered locus">Csac_1651</name>
</gene>
<accession>A4XK06</accession>
<dbReference type="EC" id="2.5.1.61" evidence="1"/>
<dbReference type="EMBL" id="CP000679">
    <property type="protein sequence ID" value="ABP67241.1"/>
    <property type="molecule type" value="Genomic_DNA"/>
</dbReference>
<dbReference type="RefSeq" id="WP_011917176.1">
    <property type="nucleotide sequence ID" value="NC_009437.1"/>
</dbReference>
<dbReference type="SMR" id="A4XK06"/>
<dbReference type="STRING" id="351627.Csac_1651"/>
<dbReference type="KEGG" id="csc:Csac_1651"/>
<dbReference type="eggNOG" id="COG0181">
    <property type="taxonomic scope" value="Bacteria"/>
</dbReference>
<dbReference type="HOGENOM" id="CLU_019704_0_2_9"/>
<dbReference type="OrthoDB" id="9810298at2"/>
<dbReference type="UniPathway" id="UPA00251">
    <property type="reaction ID" value="UER00319"/>
</dbReference>
<dbReference type="Proteomes" id="UP000000256">
    <property type="component" value="Chromosome"/>
</dbReference>
<dbReference type="GO" id="GO:0005737">
    <property type="term" value="C:cytoplasm"/>
    <property type="evidence" value="ECO:0007669"/>
    <property type="project" value="TreeGrafter"/>
</dbReference>
<dbReference type="GO" id="GO:0004418">
    <property type="term" value="F:hydroxymethylbilane synthase activity"/>
    <property type="evidence" value="ECO:0007669"/>
    <property type="project" value="UniProtKB-UniRule"/>
</dbReference>
<dbReference type="GO" id="GO:0006782">
    <property type="term" value="P:protoporphyrinogen IX biosynthetic process"/>
    <property type="evidence" value="ECO:0007669"/>
    <property type="project" value="UniProtKB-UniRule"/>
</dbReference>
<dbReference type="CDD" id="cd13647">
    <property type="entry name" value="PBP2_PBGD_2"/>
    <property type="match status" value="1"/>
</dbReference>
<dbReference type="FunFam" id="3.40.190.10:FF:000005">
    <property type="entry name" value="Porphobilinogen deaminase"/>
    <property type="match status" value="1"/>
</dbReference>
<dbReference type="Gene3D" id="3.40.190.10">
    <property type="entry name" value="Periplasmic binding protein-like II"/>
    <property type="match status" value="2"/>
</dbReference>
<dbReference type="Gene3D" id="3.30.160.40">
    <property type="entry name" value="Porphobilinogen deaminase, C-terminal domain"/>
    <property type="match status" value="1"/>
</dbReference>
<dbReference type="HAMAP" id="MF_00260">
    <property type="entry name" value="Porphobil_deam"/>
    <property type="match status" value="1"/>
</dbReference>
<dbReference type="InterPro" id="IPR000860">
    <property type="entry name" value="HemC"/>
</dbReference>
<dbReference type="InterPro" id="IPR022417">
    <property type="entry name" value="Porphobilin_deaminase_N"/>
</dbReference>
<dbReference type="InterPro" id="IPR022418">
    <property type="entry name" value="Porphobilinogen_deaminase_C"/>
</dbReference>
<dbReference type="InterPro" id="IPR036803">
    <property type="entry name" value="Porphobilinogen_deaminase_C_sf"/>
</dbReference>
<dbReference type="NCBIfam" id="TIGR00212">
    <property type="entry name" value="hemC"/>
    <property type="match status" value="1"/>
</dbReference>
<dbReference type="PANTHER" id="PTHR11557">
    <property type="entry name" value="PORPHOBILINOGEN DEAMINASE"/>
    <property type="match status" value="1"/>
</dbReference>
<dbReference type="PANTHER" id="PTHR11557:SF0">
    <property type="entry name" value="PORPHOBILINOGEN DEAMINASE"/>
    <property type="match status" value="1"/>
</dbReference>
<dbReference type="Pfam" id="PF01379">
    <property type="entry name" value="Porphobil_deam"/>
    <property type="match status" value="1"/>
</dbReference>
<dbReference type="Pfam" id="PF03900">
    <property type="entry name" value="Porphobil_deamC"/>
    <property type="match status" value="1"/>
</dbReference>
<dbReference type="PIRSF" id="PIRSF001438">
    <property type="entry name" value="4pyrrol_synth_OHMeBilane_synth"/>
    <property type="match status" value="1"/>
</dbReference>
<dbReference type="PRINTS" id="PR00151">
    <property type="entry name" value="PORPHBDMNASE"/>
</dbReference>
<dbReference type="SUPFAM" id="SSF53850">
    <property type="entry name" value="Periplasmic binding protein-like II"/>
    <property type="match status" value="1"/>
</dbReference>
<dbReference type="SUPFAM" id="SSF54782">
    <property type="entry name" value="Porphobilinogen deaminase (hydroxymethylbilane synthase), C-terminal domain"/>
    <property type="match status" value="1"/>
</dbReference>
<feature type="chain" id="PRO_1000125658" description="Porphobilinogen deaminase">
    <location>
        <begin position="1"/>
        <end position="290"/>
    </location>
</feature>
<feature type="modified residue" description="S-(dipyrrolylmethanemethyl)cysteine" evidence="1">
    <location>
        <position position="238"/>
    </location>
</feature>
<comment type="function">
    <text evidence="1">Tetrapolymerization of the monopyrrole PBG into the hydroxymethylbilane pre-uroporphyrinogen in several discrete steps.</text>
</comment>
<comment type="catalytic activity">
    <reaction evidence="1">
        <text>4 porphobilinogen + H2O = hydroxymethylbilane + 4 NH4(+)</text>
        <dbReference type="Rhea" id="RHEA:13185"/>
        <dbReference type="ChEBI" id="CHEBI:15377"/>
        <dbReference type="ChEBI" id="CHEBI:28938"/>
        <dbReference type="ChEBI" id="CHEBI:57845"/>
        <dbReference type="ChEBI" id="CHEBI:58126"/>
        <dbReference type="EC" id="2.5.1.61"/>
    </reaction>
</comment>
<comment type="cofactor">
    <cofactor evidence="1">
        <name>dipyrromethane</name>
        <dbReference type="ChEBI" id="CHEBI:60342"/>
    </cofactor>
    <text evidence="1">Binds 1 dipyrromethane group covalently.</text>
</comment>
<comment type="pathway">
    <text evidence="1">Porphyrin-containing compound metabolism; protoporphyrin-IX biosynthesis; coproporphyrinogen-III from 5-aminolevulinate: step 2/4.</text>
</comment>
<comment type="subunit">
    <text evidence="1">Monomer.</text>
</comment>
<comment type="miscellaneous">
    <text evidence="1">The porphobilinogen subunits are added to the dipyrromethane group.</text>
</comment>
<comment type="similarity">
    <text evidence="1">Belongs to the HMBS family.</text>
</comment>
<sequence>MKKLRIGARDSKLSRIQVDIVARKIKQTLGIECEFVPIKTKGDIDKTKSLKDFKSPGVFVKEIELALLSREIDLAVHSLKDLPCEMDSNFEIVAVVEREDPRDVLVSKDGVGFYQLKPNAKIGTSSLRREVHLKNLRQDIQVVNIRGNIETRLSKIESEGLDGVVLAYAALKRLNLDSHVSYIFDVNEITPCPGQGAICIECLKDSPYKNILSKINDADAYIQTQFERLVLKFLGGGCHSSIGVFCKTDQDKIYAFASILSGDKLIKASIEGDKDDFLSLANKLSNMLKS</sequence>
<reference key="1">
    <citation type="submission" date="2007-04" db="EMBL/GenBank/DDBJ databases">
        <title>Genome sequence of the thermophilic hydrogen-producing bacterium Caldicellulosiruptor saccharolyticus DSM 8903.</title>
        <authorList>
            <person name="Copeland A."/>
            <person name="Lucas S."/>
            <person name="Lapidus A."/>
            <person name="Barry K."/>
            <person name="Detter J.C."/>
            <person name="Glavina del Rio T."/>
            <person name="Hammon N."/>
            <person name="Israni S."/>
            <person name="Dalin E."/>
            <person name="Tice H."/>
            <person name="Pitluck S."/>
            <person name="Kiss H."/>
            <person name="Brettin T."/>
            <person name="Bruce D."/>
            <person name="Han C."/>
            <person name="Schmutz J."/>
            <person name="Larimer F."/>
            <person name="Land M."/>
            <person name="Hauser L."/>
            <person name="Kyrpides N."/>
            <person name="Lykidis A."/>
            <person name="van de Werken H.J.G."/>
            <person name="Verhaart M.R.A."/>
            <person name="VanFossen A.L."/>
            <person name="Lewis D.L."/>
            <person name="Nichols J.D."/>
            <person name="Goorissen H.P."/>
            <person name="van Niel E.W.J."/>
            <person name="Stams F.J.M."/>
            <person name="Willquist K.U."/>
            <person name="Ward D.E."/>
            <person name="van der Oost J."/>
            <person name="Kelly R.M."/>
            <person name="Kengen S.M.W."/>
            <person name="Richardson P."/>
        </authorList>
    </citation>
    <scope>NUCLEOTIDE SEQUENCE [LARGE SCALE GENOMIC DNA]</scope>
    <source>
        <strain>ATCC 43494 / DSM 8903 / Tp8T 6331</strain>
    </source>
</reference>
<protein>
    <recommendedName>
        <fullName evidence="1">Porphobilinogen deaminase</fullName>
        <shortName evidence="1">PBG</shortName>
        <ecNumber evidence="1">2.5.1.61</ecNumber>
    </recommendedName>
    <alternativeName>
        <fullName evidence="1">Hydroxymethylbilane synthase</fullName>
        <shortName evidence="1">HMBS</shortName>
    </alternativeName>
    <alternativeName>
        <fullName evidence="1">Pre-uroporphyrinogen synthase</fullName>
    </alternativeName>
</protein>
<proteinExistence type="inferred from homology"/>
<organism>
    <name type="scientific">Caldicellulosiruptor saccharolyticus (strain ATCC 43494 / DSM 8903 / Tp8T 6331)</name>
    <dbReference type="NCBI Taxonomy" id="351627"/>
    <lineage>
        <taxon>Bacteria</taxon>
        <taxon>Bacillati</taxon>
        <taxon>Bacillota</taxon>
        <taxon>Bacillota incertae sedis</taxon>
        <taxon>Caldicellulosiruptorales</taxon>
        <taxon>Caldicellulosiruptoraceae</taxon>
        <taxon>Caldicellulosiruptor</taxon>
    </lineage>
</organism>